<comment type="function">
    <text evidence="1">Component of the ribosome, a large ribonucleoprotein complex responsible for the synthesis of proteins in the cell. The small ribosomal subunit (SSU) binds messenger RNAs (mRNAs) and translates the encoded message by selecting cognate aminoacyl-transfer RNA (tRNA) molecules. The large subunit (LSU) contains the ribosomal catalytic site termed the peptidyl transferase center (PTC), which catalyzes the formation of peptide bonds, thereby polymerizing the amino acids delivered by tRNAs into a polypeptide chain. The nascent polypeptides leave the ribosome through a tunnel in the LSU and interact with protein factors that function in enzymatic processing, targeting, and the membrane insertion of nascent chains at the exit of the ribosomal tunnel.</text>
</comment>
<comment type="subunit">
    <text evidence="1">Component of the large ribosomal subunit.</text>
</comment>
<comment type="subcellular location">
    <subcellularLocation>
        <location evidence="1">Nucleus</location>
    </subcellularLocation>
    <subcellularLocation>
        <location evidence="1">Cytoplasm</location>
    </subcellularLocation>
</comment>
<comment type="similarity">
    <text evidence="3">Belongs to the universal ribosomal protein uL5 family.</text>
</comment>
<accession>Q962U2</accession>
<keyword id="KW-0963">Cytoplasm</keyword>
<keyword id="KW-0539">Nucleus</keyword>
<keyword id="KW-0687">Ribonucleoprotein</keyword>
<keyword id="KW-0689">Ribosomal protein</keyword>
<keyword id="KW-0694">RNA-binding</keyword>
<keyword id="KW-0699">rRNA-binding</keyword>
<protein>
    <recommendedName>
        <fullName evidence="3">Large ribosomal subunit protein uL5</fullName>
    </recommendedName>
    <alternativeName>
        <fullName>60S ribosomal protein L11</fullName>
    </alternativeName>
</protein>
<evidence type="ECO:0000250" key="1">
    <source>
        <dbReference type="UniProtKB" id="P0C0W9"/>
    </source>
</evidence>
<evidence type="ECO:0000256" key="2">
    <source>
        <dbReference type="SAM" id="MobiDB-lite"/>
    </source>
</evidence>
<evidence type="ECO:0000305" key="3"/>
<reference key="1">
    <citation type="journal article" date="2003" name="Bioinformatics">
        <title>Annotation pattern of ESTs from Spodoptera frugiperda Sf9 cells and analysis of the ribosomal protein genes reveal insect-specific features and unexpectedly low codon usage bias.</title>
        <authorList>
            <person name="Landais I."/>
            <person name="Ogliastro M."/>
            <person name="Mita K."/>
            <person name="Nohata J."/>
            <person name="Lopez-Ferber M."/>
            <person name="Duonor-Cerutti M."/>
            <person name="Shimada T."/>
            <person name="Fournier P."/>
            <person name="Devauchelle G."/>
        </authorList>
    </citation>
    <scope>NUCLEOTIDE SEQUENCE [LARGE SCALE MRNA]</scope>
</reference>
<proteinExistence type="evidence at transcript level"/>
<sequence length="195" mass="22346">MARVPPPALKKDKKEKKPPKDNSKNVMRNLHIRKLCLNICVGESGDRLTRAAKVLEQLTGQQPVFSKARYTVRSFGIRRNEKIAVHCTVRGAKAEEILERGLKVREYELRRDNFSATGNFGFGIQEHIDLGIKYDPSIGIYGLDFYVVLGPTRIQCTTQKTQDWQGWIPPIVLTKEDAMKWFQQKYDGIILNSKK</sequence>
<name>RL11_SPOFR</name>
<gene>
    <name type="primary">RpL11</name>
</gene>
<dbReference type="EMBL" id="AF400182">
    <property type="protein sequence ID" value="AAK92154.1"/>
    <property type="molecule type" value="mRNA"/>
</dbReference>
<dbReference type="SMR" id="Q962U2"/>
<dbReference type="Proteomes" id="UP000829999">
    <property type="component" value="Unplaced"/>
</dbReference>
<dbReference type="GO" id="GO:0005737">
    <property type="term" value="C:cytoplasm"/>
    <property type="evidence" value="ECO:0007669"/>
    <property type="project" value="UniProtKB-SubCell"/>
</dbReference>
<dbReference type="GO" id="GO:0005634">
    <property type="term" value="C:nucleus"/>
    <property type="evidence" value="ECO:0007669"/>
    <property type="project" value="UniProtKB-SubCell"/>
</dbReference>
<dbReference type="GO" id="GO:1990904">
    <property type="term" value="C:ribonucleoprotein complex"/>
    <property type="evidence" value="ECO:0007669"/>
    <property type="project" value="UniProtKB-KW"/>
</dbReference>
<dbReference type="GO" id="GO:0005840">
    <property type="term" value="C:ribosome"/>
    <property type="evidence" value="ECO:0007669"/>
    <property type="project" value="UniProtKB-KW"/>
</dbReference>
<dbReference type="GO" id="GO:0019843">
    <property type="term" value="F:rRNA binding"/>
    <property type="evidence" value="ECO:0007669"/>
    <property type="project" value="UniProtKB-KW"/>
</dbReference>
<dbReference type="GO" id="GO:0003735">
    <property type="term" value="F:structural constituent of ribosome"/>
    <property type="evidence" value="ECO:0007669"/>
    <property type="project" value="InterPro"/>
</dbReference>
<dbReference type="GO" id="GO:0006412">
    <property type="term" value="P:translation"/>
    <property type="evidence" value="ECO:0007669"/>
    <property type="project" value="InterPro"/>
</dbReference>
<dbReference type="FunFam" id="3.30.1440.10:FF:000004">
    <property type="entry name" value="60S ribosomal protein L11, putative"/>
    <property type="match status" value="1"/>
</dbReference>
<dbReference type="Gene3D" id="3.30.1440.10">
    <property type="match status" value="1"/>
</dbReference>
<dbReference type="InterPro" id="IPR002132">
    <property type="entry name" value="Ribosomal_uL5"/>
</dbReference>
<dbReference type="InterPro" id="IPR031309">
    <property type="entry name" value="Ribosomal_uL5_C"/>
</dbReference>
<dbReference type="InterPro" id="IPR020929">
    <property type="entry name" value="Ribosomal_uL5_CS"/>
</dbReference>
<dbReference type="InterPro" id="IPR022803">
    <property type="entry name" value="Ribosomal_uL5_dom_sf"/>
</dbReference>
<dbReference type="InterPro" id="IPR031310">
    <property type="entry name" value="Ribosomal_uL5_N"/>
</dbReference>
<dbReference type="NCBIfam" id="NF003258">
    <property type="entry name" value="PRK04219.1"/>
    <property type="match status" value="1"/>
</dbReference>
<dbReference type="PANTHER" id="PTHR11994">
    <property type="entry name" value="60S RIBOSOMAL PROTEIN L11-RELATED"/>
    <property type="match status" value="1"/>
</dbReference>
<dbReference type="Pfam" id="PF00281">
    <property type="entry name" value="Ribosomal_L5"/>
    <property type="match status" value="1"/>
</dbReference>
<dbReference type="Pfam" id="PF00673">
    <property type="entry name" value="Ribosomal_L5_C"/>
    <property type="match status" value="1"/>
</dbReference>
<dbReference type="SUPFAM" id="SSF55282">
    <property type="entry name" value="RL5-like"/>
    <property type="match status" value="1"/>
</dbReference>
<dbReference type="PROSITE" id="PS00358">
    <property type="entry name" value="RIBOSOMAL_L5"/>
    <property type="match status" value="1"/>
</dbReference>
<organism>
    <name type="scientific">Spodoptera frugiperda</name>
    <name type="common">Fall armyworm</name>
    <dbReference type="NCBI Taxonomy" id="7108"/>
    <lineage>
        <taxon>Eukaryota</taxon>
        <taxon>Metazoa</taxon>
        <taxon>Ecdysozoa</taxon>
        <taxon>Arthropoda</taxon>
        <taxon>Hexapoda</taxon>
        <taxon>Insecta</taxon>
        <taxon>Pterygota</taxon>
        <taxon>Neoptera</taxon>
        <taxon>Endopterygota</taxon>
        <taxon>Lepidoptera</taxon>
        <taxon>Glossata</taxon>
        <taxon>Ditrysia</taxon>
        <taxon>Noctuoidea</taxon>
        <taxon>Noctuidae</taxon>
        <taxon>Amphipyrinae</taxon>
        <taxon>Spodoptera</taxon>
    </lineage>
</organism>
<feature type="chain" id="PRO_0000125090" description="Large ribosomal subunit protein uL5">
    <location>
        <begin position="1"/>
        <end position="195"/>
    </location>
</feature>
<feature type="region of interest" description="Disordered" evidence="2">
    <location>
        <begin position="1"/>
        <end position="25"/>
    </location>
</feature>